<comment type="function">
    <text evidence="1 2">Catalyzes the reversible aldol cleavage of N-acetylneuraminic acid (sialic acid; Neu5Ac) to form pyruvate and N-acetylmannosamine (ManNAc) via a Schiff base intermediate.</text>
</comment>
<comment type="catalytic activity">
    <reaction evidence="1 2">
        <text>aceneuramate = aldehydo-N-acetyl-D-mannosamine + pyruvate</text>
        <dbReference type="Rhea" id="RHEA:23296"/>
        <dbReference type="ChEBI" id="CHEBI:15361"/>
        <dbReference type="ChEBI" id="CHEBI:17122"/>
        <dbReference type="ChEBI" id="CHEBI:173083"/>
        <dbReference type="EC" id="4.1.3.3"/>
    </reaction>
</comment>
<comment type="pathway">
    <text evidence="1 3">Amino-sugar metabolism; N-acetylneuraminate degradation; D-fructose 6-phosphate from N-acetylneuraminate: step 1/5.</text>
</comment>
<comment type="subunit">
    <text evidence="1 3">Homotetramer.</text>
</comment>
<comment type="subcellular location">
    <subcellularLocation>
        <location evidence="1">Cytoplasm</location>
    </subcellularLocation>
</comment>
<comment type="similarity">
    <text evidence="1">Belongs to the DapA family. NanA subfamily.</text>
</comment>
<feature type="chain" id="PRO_0000103224" description="N-acetylneuraminate lyase">
    <location>
        <begin position="1"/>
        <end position="293"/>
    </location>
</feature>
<feature type="active site" description="Proton donor" evidence="1">
    <location>
        <position position="137"/>
    </location>
</feature>
<feature type="active site" description="Schiff-base intermediate with substrate" evidence="1">
    <location>
        <position position="165"/>
    </location>
</feature>
<feature type="binding site" evidence="1">
    <location>
        <position position="48"/>
    </location>
    <ligand>
        <name>aceneuramate</name>
        <dbReference type="ChEBI" id="CHEBI:173083"/>
    </ligand>
</feature>
<feature type="binding site" evidence="1">
    <location>
        <position position="49"/>
    </location>
    <ligand>
        <name>aceneuramate</name>
        <dbReference type="ChEBI" id="CHEBI:173083"/>
    </ligand>
</feature>
<feature type="binding site" evidence="1">
    <location>
        <position position="167"/>
    </location>
    <ligand>
        <name>aceneuramate</name>
        <dbReference type="ChEBI" id="CHEBI:173083"/>
    </ligand>
</feature>
<feature type="binding site" evidence="1">
    <location>
        <position position="189"/>
    </location>
    <ligand>
        <name>aceneuramate</name>
        <dbReference type="ChEBI" id="CHEBI:173083"/>
    </ligand>
</feature>
<feature type="binding site" evidence="1">
    <location>
        <position position="191"/>
    </location>
    <ligand>
        <name>aceneuramate</name>
        <dbReference type="ChEBI" id="CHEBI:173083"/>
    </ligand>
</feature>
<feature type="binding site" evidence="1">
    <location>
        <position position="192"/>
    </location>
    <ligand>
        <name>aceneuramate</name>
        <dbReference type="ChEBI" id="CHEBI:173083"/>
    </ligand>
</feature>
<feature type="binding site" evidence="1">
    <location>
        <position position="208"/>
    </location>
    <ligand>
        <name>aceneuramate</name>
        <dbReference type="ChEBI" id="CHEBI:173083"/>
    </ligand>
</feature>
<gene>
    <name evidence="1 3" type="primary">nanA</name>
    <name type="ordered locus">SAR0312</name>
</gene>
<name>NANA_STAAR</name>
<keyword id="KW-0119">Carbohydrate metabolism</keyword>
<keyword id="KW-0963">Cytoplasm</keyword>
<keyword id="KW-0456">Lyase</keyword>
<keyword id="KW-0704">Schiff base</keyword>
<reference key="1">
    <citation type="journal article" date="2004" name="Proc. Natl. Acad. Sci. U.S.A.">
        <title>Complete genomes of two clinical Staphylococcus aureus strains: evidence for the rapid evolution of virulence and drug resistance.</title>
        <authorList>
            <person name="Holden M.T.G."/>
            <person name="Feil E.J."/>
            <person name="Lindsay J.A."/>
            <person name="Peacock S.J."/>
            <person name="Day N.P.J."/>
            <person name="Enright M.C."/>
            <person name="Foster T.J."/>
            <person name="Moore C.E."/>
            <person name="Hurst L."/>
            <person name="Atkin R."/>
            <person name="Barron A."/>
            <person name="Bason N."/>
            <person name="Bentley S.D."/>
            <person name="Chillingworth C."/>
            <person name="Chillingworth T."/>
            <person name="Churcher C."/>
            <person name="Clark L."/>
            <person name="Corton C."/>
            <person name="Cronin A."/>
            <person name="Doggett J."/>
            <person name="Dowd L."/>
            <person name="Feltwell T."/>
            <person name="Hance Z."/>
            <person name="Harris B."/>
            <person name="Hauser H."/>
            <person name="Holroyd S."/>
            <person name="Jagels K."/>
            <person name="James K.D."/>
            <person name="Lennard N."/>
            <person name="Line A."/>
            <person name="Mayes R."/>
            <person name="Moule S."/>
            <person name="Mungall K."/>
            <person name="Ormond D."/>
            <person name="Quail M.A."/>
            <person name="Rabbinowitsch E."/>
            <person name="Rutherford K.M."/>
            <person name="Sanders M."/>
            <person name="Sharp S."/>
            <person name="Simmonds M."/>
            <person name="Stevens K."/>
            <person name="Whitehead S."/>
            <person name="Barrell B.G."/>
            <person name="Spratt B.G."/>
            <person name="Parkhill J."/>
        </authorList>
    </citation>
    <scope>NUCLEOTIDE SEQUENCE [LARGE SCALE GENOMIC DNA]</scope>
    <source>
        <strain>MRSA252</strain>
    </source>
</reference>
<reference key="2">
    <citation type="journal article" date="2013" name="Acta Crystallogr. F">
        <title>Cloning, expression, purification, crystallization and preliminary X-ray diffraction studies of N-acetylneuraminate lyase from methicillin-resistant Staphylococcus aureus.</title>
        <authorList>
            <person name="North R.A."/>
            <person name="Kessans S.A."/>
            <person name="Atkinson S.C."/>
            <person name="Suzuki H."/>
            <person name="Watson A.J."/>
            <person name="Burgess B.R."/>
            <person name="Angley L.M."/>
            <person name="Hudson A.O."/>
            <person name="Varsani A."/>
            <person name="Griffin M.D."/>
            <person name="Fairbanks A.J."/>
            <person name="Dobson R.C."/>
        </authorList>
    </citation>
    <scope>FUNCTION</scope>
    <scope>CATALYTIC ACTIVITY</scope>
    <scope>SUBUNIT</scope>
    <scope>PATHWAY</scope>
    <source>
        <strain>MRSA252</strain>
    </source>
</reference>
<accession>Q6GK01</accession>
<protein>
    <recommendedName>
        <fullName evidence="1 3">N-acetylneuraminate lyase</fullName>
        <shortName evidence="1">NAL</shortName>
        <shortName evidence="1">Neu5Ac lyase</shortName>
        <ecNumber evidence="1 2">4.1.3.3</ecNumber>
    </recommendedName>
    <alternativeName>
        <fullName evidence="1">N-acetylneuraminate pyruvate-lyase</fullName>
    </alternativeName>
    <alternativeName>
        <fullName evidence="1">N-acetylneuraminic acid aldolase</fullName>
    </alternativeName>
    <alternativeName>
        <fullName evidence="1">Sialate lyase</fullName>
    </alternativeName>
    <alternativeName>
        <fullName evidence="1">Sialic acid aldolase</fullName>
    </alternativeName>
    <alternativeName>
        <fullName evidence="1">Sialic acid lyase</fullName>
    </alternativeName>
</protein>
<dbReference type="EC" id="4.1.3.3" evidence="1 2"/>
<dbReference type="EMBL" id="BX571856">
    <property type="protein sequence ID" value="CAG39336.1"/>
    <property type="molecule type" value="Genomic_DNA"/>
</dbReference>
<dbReference type="RefSeq" id="WP_001030738.1">
    <property type="nucleotide sequence ID" value="NC_002952.2"/>
</dbReference>
<dbReference type="SMR" id="Q6GK01"/>
<dbReference type="KEGG" id="sar:SAR0312"/>
<dbReference type="HOGENOM" id="CLU_049343_5_1_9"/>
<dbReference type="BRENDA" id="4.1.3.3">
    <property type="organism ID" value="3352"/>
</dbReference>
<dbReference type="UniPathway" id="UPA00629">
    <property type="reaction ID" value="UER00680"/>
</dbReference>
<dbReference type="Proteomes" id="UP000000596">
    <property type="component" value="Chromosome"/>
</dbReference>
<dbReference type="GO" id="GO:0005829">
    <property type="term" value="C:cytosol"/>
    <property type="evidence" value="ECO:0007669"/>
    <property type="project" value="TreeGrafter"/>
</dbReference>
<dbReference type="GO" id="GO:0008747">
    <property type="term" value="F:N-acetylneuraminate lyase activity"/>
    <property type="evidence" value="ECO:0007669"/>
    <property type="project" value="UniProtKB-UniRule"/>
</dbReference>
<dbReference type="GO" id="GO:0005975">
    <property type="term" value="P:carbohydrate metabolic process"/>
    <property type="evidence" value="ECO:0007669"/>
    <property type="project" value="UniProtKB-UniRule"/>
</dbReference>
<dbReference type="GO" id="GO:0019262">
    <property type="term" value="P:N-acetylneuraminate catabolic process"/>
    <property type="evidence" value="ECO:0007669"/>
    <property type="project" value="UniProtKB-UniRule"/>
</dbReference>
<dbReference type="CDD" id="cd00954">
    <property type="entry name" value="NAL"/>
    <property type="match status" value="1"/>
</dbReference>
<dbReference type="FunFam" id="3.20.20.70:FF:000039">
    <property type="entry name" value="N-acetylneuraminate lyase"/>
    <property type="match status" value="1"/>
</dbReference>
<dbReference type="Gene3D" id="3.20.20.70">
    <property type="entry name" value="Aldolase class I"/>
    <property type="match status" value="1"/>
</dbReference>
<dbReference type="HAMAP" id="MF_01237">
    <property type="entry name" value="N_acetylneuram_lyase"/>
    <property type="match status" value="1"/>
</dbReference>
<dbReference type="InterPro" id="IPR013785">
    <property type="entry name" value="Aldolase_TIM"/>
</dbReference>
<dbReference type="InterPro" id="IPR002220">
    <property type="entry name" value="DapA-like"/>
</dbReference>
<dbReference type="InterPro" id="IPR005264">
    <property type="entry name" value="NanA"/>
</dbReference>
<dbReference type="InterPro" id="IPR020625">
    <property type="entry name" value="Schiff_base-form_aldolases_AS"/>
</dbReference>
<dbReference type="NCBIfam" id="NF003164">
    <property type="entry name" value="PRK04147.1"/>
    <property type="match status" value="1"/>
</dbReference>
<dbReference type="PANTHER" id="PTHR42849">
    <property type="entry name" value="N-ACETYLNEURAMINATE LYASE"/>
    <property type="match status" value="1"/>
</dbReference>
<dbReference type="PANTHER" id="PTHR42849:SF1">
    <property type="entry name" value="N-ACETYLNEURAMINATE LYASE"/>
    <property type="match status" value="1"/>
</dbReference>
<dbReference type="Pfam" id="PF00701">
    <property type="entry name" value="DHDPS"/>
    <property type="match status" value="1"/>
</dbReference>
<dbReference type="PIRSF" id="PIRSF001365">
    <property type="entry name" value="DHDPS"/>
    <property type="match status" value="1"/>
</dbReference>
<dbReference type="PRINTS" id="PR00146">
    <property type="entry name" value="DHPICSNTHASE"/>
</dbReference>
<dbReference type="SMART" id="SM01130">
    <property type="entry name" value="DHDPS"/>
    <property type="match status" value="1"/>
</dbReference>
<dbReference type="SUPFAM" id="SSF51569">
    <property type="entry name" value="Aldolase"/>
    <property type="match status" value="1"/>
</dbReference>
<dbReference type="PROSITE" id="PS00666">
    <property type="entry name" value="DHDPS_2"/>
    <property type="match status" value="1"/>
</dbReference>
<organism>
    <name type="scientific">Staphylococcus aureus (strain MRSA252)</name>
    <dbReference type="NCBI Taxonomy" id="282458"/>
    <lineage>
        <taxon>Bacteria</taxon>
        <taxon>Bacillati</taxon>
        <taxon>Bacillota</taxon>
        <taxon>Bacilli</taxon>
        <taxon>Bacillales</taxon>
        <taxon>Staphylococcaceae</taxon>
        <taxon>Staphylococcus</taxon>
    </lineage>
</organism>
<sequence>MNKDLKGLYAALLVPFDENGQVNEQGLKQIAQNAIETEELDGLYVNGSSGENFLLNTEQKKQVFKVAKEAVGDKVKLIAQVGSLDLNEAIELGKYATELGYDALSAVTPFYYPFTFEEIRDYYFDIIEATQNNMIIYAIPDLTGVNISIEQFSELFNHEKIVGVKYTAPNFFLLERIRKAFPDKLILSGFDEMLVQATISGVDGAIGSTYNVNGRRARKIFDLARQGQIQEAYQLQHDSNDIIETVLSMGIYPTLKEILRHRGIDAGLPKRPFKPFNEAHRQTLDQLIAKYDL</sequence>
<proteinExistence type="evidence at protein level"/>
<evidence type="ECO:0000255" key="1">
    <source>
        <dbReference type="HAMAP-Rule" id="MF_01237"/>
    </source>
</evidence>
<evidence type="ECO:0000269" key="2">
    <source>
    </source>
</evidence>
<evidence type="ECO:0000303" key="3">
    <source>
    </source>
</evidence>